<protein>
    <recommendedName>
        <fullName evidence="1">Photosystem I P700 chlorophyll a apoprotein A1</fullName>
        <ecNumber evidence="1">1.97.1.12</ecNumber>
    </recommendedName>
    <alternativeName>
        <fullName evidence="1">PsaA</fullName>
    </alternativeName>
</protein>
<comment type="function">
    <text evidence="1">PsaA and PsaB bind P700, the primary electron donor of photosystem I (PSI), as well as the electron acceptors A0, A1 and FX. PSI is a plastocyanin/cytochrome c6-ferredoxin oxidoreductase, converting photonic excitation into a charge separation, which transfers an electron from the donor P700 chlorophyll pair to the spectroscopically characterized acceptors A0, A1, FX, FA and FB in turn. Oxidized P700 is reduced on the lumenal side of the thylakoid membrane by plastocyanin or cytochrome c6.</text>
</comment>
<comment type="catalytic activity">
    <reaction evidence="1">
        <text>reduced [plastocyanin] + hnu + oxidized [2Fe-2S]-[ferredoxin] = oxidized [plastocyanin] + reduced [2Fe-2S]-[ferredoxin]</text>
        <dbReference type="Rhea" id="RHEA:30407"/>
        <dbReference type="Rhea" id="RHEA-COMP:10000"/>
        <dbReference type="Rhea" id="RHEA-COMP:10001"/>
        <dbReference type="Rhea" id="RHEA-COMP:10039"/>
        <dbReference type="Rhea" id="RHEA-COMP:10040"/>
        <dbReference type="ChEBI" id="CHEBI:29036"/>
        <dbReference type="ChEBI" id="CHEBI:30212"/>
        <dbReference type="ChEBI" id="CHEBI:33737"/>
        <dbReference type="ChEBI" id="CHEBI:33738"/>
        <dbReference type="ChEBI" id="CHEBI:49552"/>
        <dbReference type="EC" id="1.97.1.12"/>
    </reaction>
</comment>
<comment type="cofactor">
    <text evidence="1">PSI electron transfer chain: 5 chlorophyll a, 1 chlorophyll a', 2 phylloquinones and 3 4Fe-4S clusters. PSI core antenna: 90 chlorophyll a, 22 carotenoids, 3 phospholipids and 1 galactolipid. P700 is a chlorophyll a/chlorophyll a' dimer, A0 is one or more chlorophyll a, A1 is one or both phylloquinones and FX is a shared 4Fe-4S iron-sulfur center.</text>
</comment>
<comment type="subunit">
    <text evidence="1">The PsaA/B heterodimer binds the P700 chlorophyll special pair and subsequent electron acceptors. PSI consists of a core antenna complex that captures photons, and an electron transfer chain that converts photonic excitation into a charge separation. The cyanobacterial PSI reaction center is composed of one copy each of PsaA,B,C,D,E,F,I,J,K,L,M and X, and forms trimeric complexes.</text>
</comment>
<comment type="subcellular location">
    <subcellularLocation>
        <location evidence="1">Cellular thylakoid membrane</location>
        <topology evidence="1">Multi-pass membrane protein</topology>
    </subcellularLocation>
</comment>
<comment type="similarity">
    <text evidence="1">Belongs to the PsaA/PsaB family.</text>
</comment>
<accession>Q3AUT5</accession>
<evidence type="ECO:0000255" key="1">
    <source>
        <dbReference type="HAMAP-Rule" id="MF_00458"/>
    </source>
</evidence>
<gene>
    <name evidence="1" type="primary">psaA</name>
    <name type="ordered locus">Syncc9902_1995</name>
</gene>
<name>PSAA_SYNS9</name>
<dbReference type="EC" id="1.97.1.12" evidence="1"/>
<dbReference type="EMBL" id="CP000097">
    <property type="protein sequence ID" value="ABB26953.1"/>
    <property type="molecule type" value="Genomic_DNA"/>
</dbReference>
<dbReference type="RefSeq" id="WP_011360744.1">
    <property type="nucleotide sequence ID" value="NC_007513.1"/>
</dbReference>
<dbReference type="SMR" id="Q3AUT5"/>
<dbReference type="STRING" id="316279.Syncc9902_1995"/>
<dbReference type="KEGG" id="sye:Syncc9902_1995"/>
<dbReference type="eggNOG" id="COG2885">
    <property type="taxonomic scope" value="Bacteria"/>
</dbReference>
<dbReference type="HOGENOM" id="CLU_016126_1_0_3"/>
<dbReference type="OrthoDB" id="499313at2"/>
<dbReference type="Proteomes" id="UP000002712">
    <property type="component" value="Chromosome"/>
</dbReference>
<dbReference type="GO" id="GO:0009522">
    <property type="term" value="C:photosystem I"/>
    <property type="evidence" value="ECO:0007669"/>
    <property type="project" value="UniProtKB-KW"/>
</dbReference>
<dbReference type="GO" id="GO:0031676">
    <property type="term" value="C:plasma membrane-derived thylakoid membrane"/>
    <property type="evidence" value="ECO:0007669"/>
    <property type="project" value="UniProtKB-SubCell"/>
</dbReference>
<dbReference type="GO" id="GO:0051539">
    <property type="term" value="F:4 iron, 4 sulfur cluster binding"/>
    <property type="evidence" value="ECO:0007669"/>
    <property type="project" value="UniProtKB-KW"/>
</dbReference>
<dbReference type="GO" id="GO:0016168">
    <property type="term" value="F:chlorophyll binding"/>
    <property type="evidence" value="ECO:0007669"/>
    <property type="project" value="UniProtKB-KW"/>
</dbReference>
<dbReference type="GO" id="GO:0009055">
    <property type="term" value="F:electron transfer activity"/>
    <property type="evidence" value="ECO:0007669"/>
    <property type="project" value="UniProtKB-UniRule"/>
</dbReference>
<dbReference type="GO" id="GO:0000287">
    <property type="term" value="F:magnesium ion binding"/>
    <property type="evidence" value="ECO:0007669"/>
    <property type="project" value="UniProtKB-UniRule"/>
</dbReference>
<dbReference type="GO" id="GO:0016491">
    <property type="term" value="F:oxidoreductase activity"/>
    <property type="evidence" value="ECO:0007669"/>
    <property type="project" value="UniProtKB-KW"/>
</dbReference>
<dbReference type="GO" id="GO:0015979">
    <property type="term" value="P:photosynthesis"/>
    <property type="evidence" value="ECO:0007669"/>
    <property type="project" value="UniProtKB-UniRule"/>
</dbReference>
<dbReference type="Gene3D" id="1.20.1130.10">
    <property type="entry name" value="Photosystem I PsaA/PsaB"/>
    <property type="match status" value="1"/>
</dbReference>
<dbReference type="HAMAP" id="MF_00458">
    <property type="entry name" value="PSI_PsaA"/>
    <property type="match status" value="1"/>
</dbReference>
<dbReference type="InterPro" id="IPR006243">
    <property type="entry name" value="PSI_PsaA"/>
</dbReference>
<dbReference type="InterPro" id="IPR001280">
    <property type="entry name" value="PSI_PsaA/B"/>
</dbReference>
<dbReference type="InterPro" id="IPR020586">
    <property type="entry name" value="PSI_PsaA/B_CS"/>
</dbReference>
<dbReference type="InterPro" id="IPR036408">
    <property type="entry name" value="PSI_PsaA/B_sf"/>
</dbReference>
<dbReference type="NCBIfam" id="TIGR01335">
    <property type="entry name" value="psaA"/>
    <property type="match status" value="1"/>
</dbReference>
<dbReference type="PANTHER" id="PTHR30128">
    <property type="entry name" value="OUTER MEMBRANE PROTEIN, OMPA-RELATED"/>
    <property type="match status" value="1"/>
</dbReference>
<dbReference type="PANTHER" id="PTHR30128:SF19">
    <property type="entry name" value="PHOTOSYSTEM I P700 CHLOROPHYLL A APOPROTEIN A1-RELATED"/>
    <property type="match status" value="1"/>
</dbReference>
<dbReference type="Pfam" id="PF00223">
    <property type="entry name" value="PsaA_PsaB"/>
    <property type="match status" value="1"/>
</dbReference>
<dbReference type="PIRSF" id="PIRSF002905">
    <property type="entry name" value="PSI_A"/>
    <property type="match status" value="1"/>
</dbReference>
<dbReference type="PRINTS" id="PR00257">
    <property type="entry name" value="PHOTSYSPSAAB"/>
</dbReference>
<dbReference type="SUPFAM" id="SSF81558">
    <property type="entry name" value="Photosystem I subunits PsaA/PsaB"/>
    <property type="match status" value="1"/>
</dbReference>
<dbReference type="PROSITE" id="PS00419">
    <property type="entry name" value="PHOTOSYSTEM_I_PSAAB"/>
    <property type="match status" value="1"/>
</dbReference>
<organism>
    <name type="scientific">Synechococcus sp. (strain CC9902)</name>
    <dbReference type="NCBI Taxonomy" id="316279"/>
    <lineage>
        <taxon>Bacteria</taxon>
        <taxon>Bacillati</taxon>
        <taxon>Cyanobacteriota</taxon>
        <taxon>Cyanophyceae</taxon>
        <taxon>Synechococcales</taxon>
        <taxon>Synechococcaceae</taxon>
        <taxon>Synechococcus</taxon>
    </lineage>
</organism>
<sequence length="767" mass="83680">MTISPPERGSDAKSQVEKVDNPATFELFGKPGHFDRALAKGPKTTTWVWNLHANAHDFDAHTSDLQEVSRRIFSAHFGHLAVIFIWLSGAFFHGARFSNYSGWLADPTHVKPSAQVVWPIFGQEILNGDMGAGFNGIQITSGLFHVWRGWGITSETQLMALAIGALVMAGLMLNAGVFHYHKSAPKLEWFQNVESMLNHHLAGLLGLGSLSWAGHLIHVSLPVTKLMDAIDAGEPLVLNGTTIASAADIPLPHEFFNQDLLAQLYPGIGSGISAFFSGNWAAYGDFLTFKGGLNPVTGSLWMTDIAHHHVAIAVLFIVAGHMYRTNWGIGHSIKEIHEGQKGDPLLFPAPNGHDGLYEFMTTSWHAQLAVNLAMLGSLSIIVAQHMYAMPPYAYMAVDYPTQIGLFTHHIWIGGFLIVGGAAHAAIAMVRDYDPAKHIDNVLDRVLKARDAIISHLNWVCIWLGAHSFGLYIHNDTMRALGRPQDMFSDQAISIQPIFAQWIQNAHAAAAGSTAPNALAGVSEVFNGSVVAVGGKVAAAPMPLGTADFMVHHIHAFTIHVTVLILLKGVLYARSSRLIPDKANLGFRFSCDGPGRGGTCQVSAWDHVFLGLFWMYNSLSIVIFHFSWKMQSDIWGTVNADGSVAHITNGNFAQSAITINGWLRDYLWAQAVQVINSYGSSTSAYGIMFLGAHFIWAFSLMFLFSGRGYWQELIESIVWAHNKLKVAPAIQPRALSIIQGRAVGVAHYLLGGIATTWAFFHAHILVVG</sequence>
<feature type="chain" id="PRO_0000294208" description="Photosystem I P700 chlorophyll a apoprotein A1">
    <location>
        <begin position="1"/>
        <end position="767"/>
    </location>
</feature>
<feature type="transmembrane region" description="Helical; Name=I" evidence="1">
    <location>
        <begin position="72"/>
        <end position="95"/>
    </location>
</feature>
<feature type="transmembrane region" description="Helical; Name=II" evidence="1">
    <location>
        <begin position="158"/>
        <end position="181"/>
    </location>
</feature>
<feature type="transmembrane region" description="Helical; Name=III" evidence="1">
    <location>
        <begin position="197"/>
        <end position="221"/>
    </location>
</feature>
<feature type="transmembrane region" description="Helical; Name=IV" evidence="1">
    <location>
        <begin position="305"/>
        <end position="323"/>
    </location>
</feature>
<feature type="transmembrane region" description="Helical; Name=V" evidence="1">
    <location>
        <begin position="364"/>
        <end position="387"/>
    </location>
</feature>
<feature type="transmembrane region" description="Helical; Name=VI" evidence="1">
    <location>
        <begin position="403"/>
        <end position="429"/>
    </location>
</feature>
<feature type="transmembrane region" description="Helical; Name=VII" evidence="1">
    <location>
        <begin position="451"/>
        <end position="473"/>
    </location>
</feature>
<feature type="transmembrane region" description="Helical; Name=VIII" evidence="1">
    <location>
        <begin position="548"/>
        <end position="566"/>
    </location>
</feature>
<feature type="transmembrane region" description="Helical; Name=IX" evidence="1">
    <location>
        <begin position="606"/>
        <end position="627"/>
    </location>
</feature>
<feature type="transmembrane region" description="Helical; Name=X" evidence="1">
    <location>
        <begin position="681"/>
        <end position="703"/>
    </location>
</feature>
<feature type="transmembrane region" description="Helical; Name=XI" evidence="1">
    <location>
        <begin position="741"/>
        <end position="761"/>
    </location>
</feature>
<feature type="binding site" evidence="1">
    <location>
        <position position="590"/>
    </location>
    <ligand>
        <name>[4Fe-4S] cluster</name>
        <dbReference type="ChEBI" id="CHEBI:49883"/>
        <note>ligand shared between dimeric partners</note>
    </ligand>
</feature>
<feature type="binding site" evidence="1">
    <location>
        <position position="599"/>
    </location>
    <ligand>
        <name>[4Fe-4S] cluster</name>
        <dbReference type="ChEBI" id="CHEBI:49883"/>
        <note>ligand shared between dimeric partners</note>
    </ligand>
</feature>
<feature type="binding site" description="axial binding residue" evidence="1">
    <location>
        <position position="692"/>
    </location>
    <ligand>
        <name>chlorophyll a'</name>
        <dbReference type="ChEBI" id="CHEBI:189419"/>
        <label>A1</label>
    </ligand>
    <ligandPart>
        <name>Mg</name>
        <dbReference type="ChEBI" id="CHEBI:25107"/>
    </ligandPart>
</feature>
<feature type="binding site" description="axial binding residue" evidence="1">
    <location>
        <position position="700"/>
    </location>
    <ligand>
        <name>chlorophyll a</name>
        <dbReference type="ChEBI" id="CHEBI:58416"/>
        <label>A3</label>
    </ligand>
    <ligandPart>
        <name>Mg</name>
        <dbReference type="ChEBI" id="CHEBI:25107"/>
    </ligandPart>
</feature>
<feature type="binding site" evidence="1">
    <location>
        <position position="708"/>
    </location>
    <ligand>
        <name>chlorophyll a</name>
        <dbReference type="ChEBI" id="CHEBI:58416"/>
        <label>A3</label>
    </ligand>
</feature>
<feature type="binding site" evidence="1">
    <location>
        <position position="709"/>
    </location>
    <ligand>
        <name>phylloquinone</name>
        <dbReference type="ChEBI" id="CHEBI:18067"/>
        <label>A</label>
    </ligand>
</feature>
<proteinExistence type="inferred from homology"/>
<keyword id="KW-0004">4Fe-4S</keyword>
<keyword id="KW-0148">Chlorophyll</keyword>
<keyword id="KW-0157">Chromophore</keyword>
<keyword id="KW-0249">Electron transport</keyword>
<keyword id="KW-0408">Iron</keyword>
<keyword id="KW-0411">Iron-sulfur</keyword>
<keyword id="KW-0460">Magnesium</keyword>
<keyword id="KW-0472">Membrane</keyword>
<keyword id="KW-0479">Metal-binding</keyword>
<keyword id="KW-0560">Oxidoreductase</keyword>
<keyword id="KW-0602">Photosynthesis</keyword>
<keyword id="KW-0603">Photosystem I</keyword>
<keyword id="KW-1185">Reference proteome</keyword>
<keyword id="KW-0793">Thylakoid</keyword>
<keyword id="KW-0812">Transmembrane</keyword>
<keyword id="KW-1133">Transmembrane helix</keyword>
<keyword id="KW-0813">Transport</keyword>
<reference key="1">
    <citation type="submission" date="2005-08" db="EMBL/GenBank/DDBJ databases">
        <title>Complete sequence of Synechococcus sp. CC9902.</title>
        <authorList>
            <person name="Copeland A."/>
            <person name="Lucas S."/>
            <person name="Lapidus A."/>
            <person name="Barry K."/>
            <person name="Detter J.C."/>
            <person name="Glavina T."/>
            <person name="Hammon N."/>
            <person name="Israni S."/>
            <person name="Pitluck S."/>
            <person name="Martinez M."/>
            <person name="Schmutz J."/>
            <person name="Larimer F."/>
            <person name="Land M."/>
            <person name="Kyrpides N."/>
            <person name="Ivanova N."/>
            <person name="Richardson P."/>
        </authorList>
    </citation>
    <scope>NUCLEOTIDE SEQUENCE [LARGE SCALE GENOMIC DNA]</scope>
    <source>
        <strain>CC9902</strain>
    </source>
</reference>